<dbReference type="EC" id="2.7.1.148" evidence="1"/>
<dbReference type="EMBL" id="CP000046">
    <property type="protein sequence ID" value="AAW37657.1"/>
    <property type="molecule type" value="Genomic_DNA"/>
</dbReference>
<dbReference type="RefSeq" id="WP_000638870.1">
    <property type="nucleotide sequence ID" value="NZ_JBGOFO010000012.1"/>
</dbReference>
<dbReference type="SMR" id="Q5HII1"/>
<dbReference type="KEGG" id="sac:SACOL0538"/>
<dbReference type="HOGENOM" id="CLU_053057_1_1_9"/>
<dbReference type="Proteomes" id="UP000000530">
    <property type="component" value="Chromosome"/>
</dbReference>
<dbReference type="GO" id="GO:0050515">
    <property type="term" value="F:4-(cytidine 5'-diphospho)-2-C-methyl-D-erythritol kinase activity"/>
    <property type="evidence" value="ECO:0007669"/>
    <property type="project" value="UniProtKB-UniRule"/>
</dbReference>
<dbReference type="GO" id="GO:0005524">
    <property type="term" value="F:ATP binding"/>
    <property type="evidence" value="ECO:0007669"/>
    <property type="project" value="UniProtKB-UniRule"/>
</dbReference>
<dbReference type="GO" id="GO:0016114">
    <property type="term" value="P:terpenoid biosynthetic process"/>
    <property type="evidence" value="ECO:0007669"/>
    <property type="project" value="InterPro"/>
</dbReference>
<dbReference type="FunFam" id="3.30.230.10:FF:000029">
    <property type="entry name" value="4-diphosphocytidyl-2-C-methyl-D-erythritol kinase"/>
    <property type="match status" value="1"/>
</dbReference>
<dbReference type="FunFam" id="3.30.70.890:FF:000006">
    <property type="entry name" value="4-diphosphocytidyl-2-C-methyl-D-erythritol kinase"/>
    <property type="match status" value="1"/>
</dbReference>
<dbReference type="Gene3D" id="3.30.230.10">
    <property type="match status" value="1"/>
</dbReference>
<dbReference type="Gene3D" id="3.30.70.890">
    <property type="entry name" value="GHMP kinase, C-terminal domain"/>
    <property type="match status" value="1"/>
</dbReference>
<dbReference type="HAMAP" id="MF_00061">
    <property type="entry name" value="IspE"/>
    <property type="match status" value="1"/>
</dbReference>
<dbReference type="InterPro" id="IPR013750">
    <property type="entry name" value="GHMP_kinase_C_dom"/>
</dbReference>
<dbReference type="InterPro" id="IPR036554">
    <property type="entry name" value="GHMP_kinase_C_sf"/>
</dbReference>
<dbReference type="InterPro" id="IPR006204">
    <property type="entry name" value="GHMP_kinase_N_dom"/>
</dbReference>
<dbReference type="InterPro" id="IPR004424">
    <property type="entry name" value="IspE"/>
</dbReference>
<dbReference type="InterPro" id="IPR020568">
    <property type="entry name" value="Ribosomal_Su5_D2-typ_SF"/>
</dbReference>
<dbReference type="InterPro" id="IPR014721">
    <property type="entry name" value="Ribsml_uS5_D2-typ_fold_subgr"/>
</dbReference>
<dbReference type="NCBIfam" id="TIGR00154">
    <property type="entry name" value="ispE"/>
    <property type="match status" value="1"/>
</dbReference>
<dbReference type="PANTHER" id="PTHR43527">
    <property type="entry name" value="4-DIPHOSPHOCYTIDYL-2-C-METHYL-D-ERYTHRITOL KINASE, CHLOROPLASTIC"/>
    <property type="match status" value="1"/>
</dbReference>
<dbReference type="PANTHER" id="PTHR43527:SF2">
    <property type="entry name" value="4-DIPHOSPHOCYTIDYL-2-C-METHYL-D-ERYTHRITOL KINASE, CHLOROPLASTIC"/>
    <property type="match status" value="1"/>
</dbReference>
<dbReference type="Pfam" id="PF08544">
    <property type="entry name" value="GHMP_kinases_C"/>
    <property type="match status" value="1"/>
</dbReference>
<dbReference type="Pfam" id="PF00288">
    <property type="entry name" value="GHMP_kinases_N"/>
    <property type="match status" value="1"/>
</dbReference>
<dbReference type="PIRSF" id="PIRSF010376">
    <property type="entry name" value="IspE"/>
    <property type="match status" value="1"/>
</dbReference>
<dbReference type="SUPFAM" id="SSF55060">
    <property type="entry name" value="GHMP Kinase, C-terminal domain"/>
    <property type="match status" value="1"/>
</dbReference>
<dbReference type="SUPFAM" id="SSF54211">
    <property type="entry name" value="Ribosomal protein S5 domain 2-like"/>
    <property type="match status" value="1"/>
</dbReference>
<feature type="chain" id="PRO_0000189261" description="Putative 4-diphosphocytidyl-2-C-methyl-D-erythritol kinase">
    <location>
        <begin position="1"/>
        <end position="282"/>
    </location>
</feature>
<feature type="active site" evidence="1">
    <location>
        <position position="9"/>
    </location>
</feature>
<feature type="active site" evidence="1">
    <location>
        <position position="135"/>
    </location>
</feature>
<feature type="binding site" evidence="1">
    <location>
        <begin position="93"/>
        <end position="103"/>
    </location>
    <ligand>
        <name>ATP</name>
        <dbReference type="ChEBI" id="CHEBI:30616"/>
    </ligand>
</feature>
<accession>Q5HII1</accession>
<sequence>MIYETAPAKINFTLDTLFKRNDGYHEIEMIMTTVDLNDRLTFHKRKDRKIVVEIEHNYVPSNHKNLAYRAAQLFIEQYQLKQGVTISIDKEIPVSAGLAGGSADAAATLRGLNRLFDIGASLEELALLGSKIGTDIPFCIYNKTALCTGRGEKIEFLNKPPSAWVILAKPNLGISSPDIFKLINLDKRYDVHTKMCYEALENRDYQQLCQSLSNRLEPISVSKHPQIDKLKNNMLKSGADGALMSGSGPTVYGLARKESQAKNIYNAVNGCCNEVYLVRLLG</sequence>
<gene>
    <name type="primary">ispE</name>
    <name type="ordered locus">SACOL0538</name>
</gene>
<protein>
    <recommendedName>
        <fullName evidence="1">Putative 4-diphosphocytidyl-2-C-methyl-D-erythritol kinase</fullName>
        <shortName evidence="1">CMK</shortName>
        <ecNumber evidence="1">2.7.1.148</ecNumber>
    </recommendedName>
    <alternativeName>
        <fullName evidence="1">4-(cytidine-5'-diphospho)-2-C-methyl-D-erythritol kinase</fullName>
    </alternativeName>
</protein>
<organism>
    <name type="scientific">Staphylococcus aureus (strain COL)</name>
    <dbReference type="NCBI Taxonomy" id="93062"/>
    <lineage>
        <taxon>Bacteria</taxon>
        <taxon>Bacillati</taxon>
        <taxon>Bacillota</taxon>
        <taxon>Bacilli</taxon>
        <taxon>Bacillales</taxon>
        <taxon>Staphylococcaceae</taxon>
        <taxon>Staphylococcus</taxon>
    </lineage>
</organism>
<keyword id="KW-0067">ATP-binding</keyword>
<keyword id="KW-0418">Kinase</keyword>
<keyword id="KW-0547">Nucleotide-binding</keyword>
<keyword id="KW-0808">Transferase</keyword>
<evidence type="ECO:0000255" key="1">
    <source>
        <dbReference type="HAMAP-Rule" id="MF_00061"/>
    </source>
</evidence>
<reference key="1">
    <citation type="journal article" date="2005" name="J. Bacteriol.">
        <title>Insights on evolution of virulence and resistance from the complete genome analysis of an early methicillin-resistant Staphylococcus aureus strain and a biofilm-producing methicillin-resistant Staphylococcus epidermidis strain.</title>
        <authorList>
            <person name="Gill S.R."/>
            <person name="Fouts D.E."/>
            <person name="Archer G.L."/>
            <person name="Mongodin E.F."/>
            <person name="DeBoy R.T."/>
            <person name="Ravel J."/>
            <person name="Paulsen I.T."/>
            <person name="Kolonay J.F."/>
            <person name="Brinkac L.M."/>
            <person name="Beanan M.J."/>
            <person name="Dodson R.J."/>
            <person name="Daugherty S.C."/>
            <person name="Madupu R."/>
            <person name="Angiuoli S.V."/>
            <person name="Durkin A.S."/>
            <person name="Haft D.H."/>
            <person name="Vamathevan J.J."/>
            <person name="Khouri H."/>
            <person name="Utterback T.R."/>
            <person name="Lee C."/>
            <person name="Dimitrov G."/>
            <person name="Jiang L."/>
            <person name="Qin H."/>
            <person name="Weidman J."/>
            <person name="Tran K."/>
            <person name="Kang K.H."/>
            <person name="Hance I.R."/>
            <person name="Nelson K.E."/>
            <person name="Fraser C.M."/>
        </authorList>
    </citation>
    <scope>NUCLEOTIDE SEQUENCE [LARGE SCALE GENOMIC DNA]</scope>
    <source>
        <strain>COL</strain>
    </source>
</reference>
<proteinExistence type="inferred from homology"/>
<name>ISPE_STAAC</name>
<comment type="function">
    <text evidence="1">Catalyzes the phosphorylation of the position 2 hydroxy group of 4-diphosphocytidyl-2C-methyl-D-erythritol.</text>
</comment>
<comment type="catalytic activity">
    <reaction evidence="1">
        <text>4-CDP-2-C-methyl-D-erythritol + ATP = 4-CDP-2-C-methyl-D-erythritol 2-phosphate + ADP + H(+)</text>
        <dbReference type="Rhea" id="RHEA:18437"/>
        <dbReference type="ChEBI" id="CHEBI:15378"/>
        <dbReference type="ChEBI" id="CHEBI:30616"/>
        <dbReference type="ChEBI" id="CHEBI:57823"/>
        <dbReference type="ChEBI" id="CHEBI:57919"/>
        <dbReference type="ChEBI" id="CHEBI:456216"/>
        <dbReference type="EC" id="2.7.1.148"/>
    </reaction>
</comment>
<comment type="similarity">
    <text evidence="1">Belongs to the GHMP kinase family. IspE subfamily.</text>
</comment>